<accession>A8AA46</accession>
<gene>
    <name evidence="1" type="primary">psmB1</name>
    <name type="ordered locus">Igni_0616</name>
</gene>
<sequence length="198" mass="21381">MSGPGATAVGIKVKDGVVLAAERRMSYGGFIMSKAARKVFKVGDRMGMACAGLYADMQAIARALENEIRYYEISNKRKMKVRSAARLLGLILYSNKLFPLMTETVFGGYDDEPRIFVLDPVGSVIEEKYSAVGTGAPLAMALLDKEYREDMSLEEAQNLAIESVKVASGRDSLSGDGIDVLVIPFGGKPSIRTVSLEA</sequence>
<dbReference type="EC" id="3.4.25.1" evidence="1"/>
<dbReference type="EMBL" id="CP000816">
    <property type="protein sequence ID" value="ABU81798.1"/>
    <property type="molecule type" value="Genomic_DNA"/>
</dbReference>
<dbReference type="RefSeq" id="WP_011998650.1">
    <property type="nucleotide sequence ID" value="NC_009776.1"/>
</dbReference>
<dbReference type="SMR" id="A8AA46"/>
<dbReference type="STRING" id="453591.Igni_0616"/>
<dbReference type="GeneID" id="5561828"/>
<dbReference type="KEGG" id="iho:Igni_0616"/>
<dbReference type="eggNOG" id="arCOG00970">
    <property type="taxonomic scope" value="Archaea"/>
</dbReference>
<dbReference type="HOGENOM" id="CLU_035750_7_2_2"/>
<dbReference type="OrthoDB" id="6330at2157"/>
<dbReference type="PhylomeDB" id="A8AA46"/>
<dbReference type="Proteomes" id="UP000000262">
    <property type="component" value="Chromosome"/>
</dbReference>
<dbReference type="GO" id="GO:0005737">
    <property type="term" value="C:cytoplasm"/>
    <property type="evidence" value="ECO:0007669"/>
    <property type="project" value="UniProtKB-SubCell"/>
</dbReference>
<dbReference type="GO" id="GO:0019774">
    <property type="term" value="C:proteasome core complex, beta-subunit complex"/>
    <property type="evidence" value="ECO:0007669"/>
    <property type="project" value="UniProtKB-UniRule"/>
</dbReference>
<dbReference type="GO" id="GO:0004298">
    <property type="term" value="F:threonine-type endopeptidase activity"/>
    <property type="evidence" value="ECO:0007669"/>
    <property type="project" value="UniProtKB-UniRule"/>
</dbReference>
<dbReference type="GO" id="GO:0010498">
    <property type="term" value="P:proteasomal protein catabolic process"/>
    <property type="evidence" value="ECO:0007669"/>
    <property type="project" value="UniProtKB-UniRule"/>
</dbReference>
<dbReference type="Gene3D" id="3.60.20.10">
    <property type="entry name" value="Glutamine Phosphoribosylpyrophosphate, subunit 1, domain 1"/>
    <property type="match status" value="1"/>
</dbReference>
<dbReference type="HAMAP" id="MF_02113_A">
    <property type="entry name" value="Proteasome_B_A"/>
    <property type="match status" value="1"/>
</dbReference>
<dbReference type="InterPro" id="IPR029055">
    <property type="entry name" value="Ntn_hydrolases_N"/>
</dbReference>
<dbReference type="InterPro" id="IPR019983">
    <property type="entry name" value="Pept_T1A_Psome_bsu_arc"/>
</dbReference>
<dbReference type="InterPro" id="IPR000243">
    <property type="entry name" value="Pept_T1A_subB"/>
</dbReference>
<dbReference type="InterPro" id="IPR016050">
    <property type="entry name" value="Proteasome_bsu_CS"/>
</dbReference>
<dbReference type="InterPro" id="IPR001353">
    <property type="entry name" value="Proteasome_sua/b"/>
</dbReference>
<dbReference type="InterPro" id="IPR023333">
    <property type="entry name" value="Proteasome_suB-type"/>
</dbReference>
<dbReference type="NCBIfam" id="TIGR03634">
    <property type="entry name" value="arc_protsome_B"/>
    <property type="match status" value="1"/>
</dbReference>
<dbReference type="PANTHER" id="PTHR32194">
    <property type="entry name" value="METALLOPROTEASE TLDD"/>
    <property type="match status" value="1"/>
</dbReference>
<dbReference type="PANTHER" id="PTHR32194:SF2">
    <property type="entry name" value="PROTEASOME SUBUNIT BETA TYPE-1"/>
    <property type="match status" value="1"/>
</dbReference>
<dbReference type="Pfam" id="PF00227">
    <property type="entry name" value="Proteasome"/>
    <property type="match status" value="1"/>
</dbReference>
<dbReference type="PRINTS" id="PR00141">
    <property type="entry name" value="PROTEASOME"/>
</dbReference>
<dbReference type="SUPFAM" id="SSF56235">
    <property type="entry name" value="N-terminal nucleophile aminohydrolases (Ntn hydrolases)"/>
    <property type="match status" value="1"/>
</dbReference>
<dbReference type="PROSITE" id="PS00854">
    <property type="entry name" value="PROTEASOME_BETA_1"/>
    <property type="match status" value="1"/>
</dbReference>
<dbReference type="PROSITE" id="PS51476">
    <property type="entry name" value="PROTEASOME_BETA_2"/>
    <property type="match status" value="1"/>
</dbReference>
<organism>
    <name type="scientific">Ignicoccus hospitalis (strain KIN4/I / DSM 18386 / JCM 14125)</name>
    <dbReference type="NCBI Taxonomy" id="453591"/>
    <lineage>
        <taxon>Archaea</taxon>
        <taxon>Thermoproteota</taxon>
        <taxon>Thermoprotei</taxon>
        <taxon>Desulfurococcales</taxon>
        <taxon>Desulfurococcaceae</taxon>
        <taxon>Ignicoccus</taxon>
    </lineage>
</organism>
<feature type="propeptide" id="PRO_0000397318" description="Removed in mature form; by autocatalysis" evidence="1">
    <location>
        <begin position="1"/>
        <end position="6"/>
    </location>
</feature>
<feature type="chain" id="PRO_0000397319" description="Proteasome subunit beta 1">
    <location>
        <begin position="7"/>
        <end position="198"/>
    </location>
</feature>
<feature type="active site" description="Nucleophile" evidence="1">
    <location>
        <position position="7"/>
    </location>
</feature>
<protein>
    <recommendedName>
        <fullName evidence="1">Proteasome subunit beta 1</fullName>
        <ecNumber evidence="1">3.4.25.1</ecNumber>
    </recommendedName>
    <alternativeName>
        <fullName evidence="1">20S proteasome beta subunit 1</fullName>
    </alternativeName>
    <alternativeName>
        <fullName evidence="1">Proteasome core protein PsmB 1</fullName>
    </alternativeName>
</protein>
<keyword id="KW-0068">Autocatalytic cleavage</keyword>
<keyword id="KW-0963">Cytoplasm</keyword>
<keyword id="KW-0378">Hydrolase</keyword>
<keyword id="KW-0645">Protease</keyword>
<keyword id="KW-0647">Proteasome</keyword>
<keyword id="KW-1185">Reference proteome</keyword>
<keyword id="KW-0888">Threonine protease</keyword>
<keyword id="KW-0865">Zymogen</keyword>
<comment type="function">
    <text evidence="1">Component of the proteasome core, a large protease complex with broad specificity involved in protein degradation.</text>
</comment>
<comment type="catalytic activity">
    <reaction evidence="1">
        <text>Cleavage of peptide bonds with very broad specificity.</text>
        <dbReference type="EC" id="3.4.25.1"/>
    </reaction>
</comment>
<comment type="activity regulation">
    <text evidence="1">The formation of the proteasomal ATPase PAN-20S proteasome complex, via the docking of the C-termini of PAN into the intersubunit pockets in the alpha-rings, triggers opening of the gate for substrate entry. Interconversion between the open-gate and close-gate conformations leads to a dynamic regulation of the 20S proteasome proteolysis activity.</text>
</comment>
<comment type="subunit">
    <text evidence="1">The 20S proteasome core is composed of 14 alpha and 14 beta subunits that assemble into four stacked heptameric rings, resulting in a barrel-shaped structure. The two inner rings, each composed of seven catalytic beta subunits, are sandwiched by two outer rings, each composed of seven alpha subunits. The catalytic chamber with the active sites is on the inside of the barrel. Has a gated structure, the ends of the cylinder being occluded by the N-termini of the alpha-subunits. Is capped at one or both ends by the proteasome regulatory ATPase, PAN.</text>
</comment>
<comment type="subcellular location">
    <subcellularLocation>
        <location evidence="1">Cytoplasm</location>
    </subcellularLocation>
</comment>
<comment type="similarity">
    <text evidence="1">Belongs to the peptidase T1B family.</text>
</comment>
<evidence type="ECO:0000255" key="1">
    <source>
        <dbReference type="HAMAP-Rule" id="MF_02113"/>
    </source>
</evidence>
<proteinExistence type="inferred from homology"/>
<reference key="1">
    <citation type="journal article" date="2008" name="Genome Biol.">
        <title>A genomic analysis of the archaeal system Ignicoccus hospitalis-Nanoarchaeum equitans.</title>
        <authorList>
            <person name="Podar M."/>
            <person name="Anderson I."/>
            <person name="Makarova K.S."/>
            <person name="Elkins J.G."/>
            <person name="Ivanova N."/>
            <person name="Wall M.A."/>
            <person name="Lykidis A."/>
            <person name="Mavromatis K."/>
            <person name="Sun H."/>
            <person name="Hudson M.E."/>
            <person name="Chen W."/>
            <person name="Deciu C."/>
            <person name="Hutchison D."/>
            <person name="Eads J.R."/>
            <person name="Anderson A."/>
            <person name="Fernandes F."/>
            <person name="Szeto E."/>
            <person name="Lapidus A."/>
            <person name="Kyrpides N.C."/>
            <person name="Saier M.H. Jr."/>
            <person name="Richardson P.M."/>
            <person name="Rachel R."/>
            <person name="Huber H."/>
            <person name="Eisen J.A."/>
            <person name="Koonin E.V."/>
            <person name="Keller M."/>
            <person name="Stetter K.O."/>
        </authorList>
    </citation>
    <scope>NUCLEOTIDE SEQUENCE [LARGE SCALE GENOMIC DNA]</scope>
    <source>
        <strain>KIN4/I / DSM 18386 / JCM 14125</strain>
    </source>
</reference>
<name>PSB1_IGNH4</name>